<accession>A2YEQ6</accession>
<feature type="chain" id="PRO_0000347213" description="GTP-binding nuclear protein Ran-3">
    <location>
        <begin position="1"/>
        <end position="226"/>
    </location>
</feature>
<feature type="domain" description="Small GTPase Ran-type" evidence="3">
    <location>
        <begin position="14"/>
        <end position="178"/>
    </location>
</feature>
<feature type="region of interest" description="Switch-I" evidence="3">
    <location>
        <begin position="44"/>
        <end position="52"/>
    </location>
</feature>
<feature type="region of interest" description="Switch-II" evidence="3">
    <location>
        <begin position="75"/>
        <end position="91"/>
    </location>
</feature>
<feature type="binding site" evidence="2">
    <location>
        <begin position="25"/>
        <end position="32"/>
    </location>
    <ligand>
        <name>GTP</name>
        <dbReference type="ChEBI" id="CHEBI:37565"/>
    </ligand>
</feature>
<feature type="binding site" evidence="2">
    <location>
        <position position="75"/>
    </location>
    <ligand>
        <name>GTP</name>
        <dbReference type="ChEBI" id="CHEBI:37565"/>
    </ligand>
</feature>
<feature type="binding site" evidence="2">
    <location>
        <begin position="129"/>
        <end position="132"/>
    </location>
    <ligand>
        <name>GTP</name>
        <dbReference type="ChEBI" id="CHEBI:37565"/>
    </ligand>
</feature>
<feature type="binding site" evidence="2">
    <location>
        <begin position="157"/>
        <end position="159"/>
    </location>
    <ligand>
        <name>GTP</name>
        <dbReference type="ChEBI" id="CHEBI:37565"/>
    </ligand>
</feature>
<keyword id="KW-0342">GTP-binding</keyword>
<keyword id="KW-0547">Nucleotide-binding</keyword>
<keyword id="KW-0539">Nucleus</keyword>
<keyword id="KW-0653">Protein transport</keyword>
<keyword id="KW-1185">Reference proteome</keyword>
<keyword id="KW-0813">Transport</keyword>
<evidence type="ECO:0000250" key="1"/>
<evidence type="ECO:0000250" key="2">
    <source>
        <dbReference type="UniProtKB" id="P62825"/>
    </source>
</evidence>
<evidence type="ECO:0000255" key="3">
    <source>
        <dbReference type="PROSITE-ProRule" id="PRU00752"/>
    </source>
</evidence>
<evidence type="ECO:0000305" key="4"/>
<comment type="function">
    <text evidence="1">GTP-binding protein involved in nucleocytoplasmic transport. Required for the import of protein into the nucleus and also for RNA export. Involved in chromatin condensation and control of cell cycle (By similarity).</text>
</comment>
<comment type="subunit">
    <text evidence="2">Found in a nuclear export complex with RanGTP, exportin and pre-miRNA (By similarity).</text>
</comment>
<comment type="subcellular location">
    <subcellularLocation>
        <location evidence="1">Nucleus</location>
    </subcellularLocation>
</comment>
<comment type="similarity">
    <text evidence="3 4">Belongs to the small GTPase superfamily. Ran family.</text>
</comment>
<gene>
    <name type="primary">RAN3</name>
    <name type="ORF">OsI_022799</name>
</gene>
<name>RAN3_ORYSI</name>
<organism>
    <name type="scientific">Oryza sativa subsp. indica</name>
    <name type="common">Rice</name>
    <dbReference type="NCBI Taxonomy" id="39946"/>
    <lineage>
        <taxon>Eukaryota</taxon>
        <taxon>Viridiplantae</taxon>
        <taxon>Streptophyta</taxon>
        <taxon>Embryophyta</taxon>
        <taxon>Tracheophyta</taxon>
        <taxon>Spermatophyta</taxon>
        <taxon>Magnoliopsida</taxon>
        <taxon>Liliopsida</taxon>
        <taxon>Poales</taxon>
        <taxon>Poaceae</taxon>
        <taxon>BOP clade</taxon>
        <taxon>Oryzoideae</taxon>
        <taxon>Oryzeae</taxon>
        <taxon>Oryzinae</taxon>
        <taxon>Oryza</taxon>
        <taxon>Oryza sativa</taxon>
    </lineage>
</organism>
<dbReference type="EMBL" id="CM000131">
    <property type="status" value="NOT_ANNOTATED_CDS"/>
    <property type="molecule type" value="Genomic_DNA"/>
</dbReference>
<dbReference type="SMR" id="A2YEQ6"/>
<dbReference type="STRING" id="39946.A2YEQ6"/>
<dbReference type="EnsemblPlants" id="OsGoSa_06g0021060.01">
    <property type="protein sequence ID" value="OsGoSa_06g0021060.01"/>
    <property type="gene ID" value="OsGoSa_06g0021060"/>
</dbReference>
<dbReference type="EnsemblPlants" id="OsIR64_06g0021010.01">
    <property type="protein sequence ID" value="OsIR64_06g0021010.01"/>
    <property type="gene ID" value="OsIR64_06g0021010"/>
</dbReference>
<dbReference type="EnsemblPlants" id="OsKYG_06g0021420.01">
    <property type="protein sequence ID" value="OsKYG_06g0021420.01"/>
    <property type="gene ID" value="OsKYG_06g0021420"/>
</dbReference>
<dbReference type="EnsemblPlants" id="OsLaMu_06g0021310.01">
    <property type="protein sequence ID" value="OsLaMu_06g0021310.01"/>
    <property type="gene ID" value="OsLaMu_06g0021310"/>
</dbReference>
<dbReference type="EnsemblPlants" id="OsLima_Ung0003660.01">
    <property type="protein sequence ID" value="OsLima_Ung0003660.01"/>
    <property type="gene ID" value="OsLima_Ung0003660"/>
</dbReference>
<dbReference type="EnsemblPlants" id="OsLiXu_06g0021730.01">
    <property type="protein sequence ID" value="OsLiXu_06g0021730.01"/>
    <property type="gene ID" value="OsLiXu_06g0021730"/>
</dbReference>
<dbReference type="EnsemblPlants" id="OsMH63_06G021330_02">
    <property type="protein sequence ID" value="OsMH63_06G021330_02"/>
    <property type="gene ID" value="OsMH63_06G021330"/>
</dbReference>
<dbReference type="EnsemblPlants" id="OsPr106_06g0021580.01">
    <property type="protein sequence ID" value="OsPr106_06g0021580.01"/>
    <property type="gene ID" value="OsPr106_06g0021580"/>
</dbReference>
<dbReference type="Gramene" id="OsGoSa_06g0021060.01">
    <property type="protein sequence ID" value="OsGoSa_06g0021060.01"/>
    <property type="gene ID" value="OsGoSa_06g0021060"/>
</dbReference>
<dbReference type="Gramene" id="OsIR64_06g0021010.01">
    <property type="protein sequence ID" value="OsIR64_06g0021010.01"/>
    <property type="gene ID" value="OsIR64_06g0021010"/>
</dbReference>
<dbReference type="Gramene" id="OsKYG_06g0021420.01">
    <property type="protein sequence ID" value="OsKYG_06g0021420.01"/>
    <property type="gene ID" value="OsKYG_06g0021420"/>
</dbReference>
<dbReference type="Gramene" id="OsLaMu_06g0021310.01">
    <property type="protein sequence ID" value="OsLaMu_06g0021310.01"/>
    <property type="gene ID" value="OsLaMu_06g0021310"/>
</dbReference>
<dbReference type="Gramene" id="OsLima_Ung0003660.01">
    <property type="protein sequence ID" value="OsLima_Ung0003660.01"/>
    <property type="gene ID" value="OsLima_Ung0003660"/>
</dbReference>
<dbReference type="Gramene" id="OsLiXu_06g0021730.01">
    <property type="protein sequence ID" value="OsLiXu_06g0021730.01"/>
    <property type="gene ID" value="OsLiXu_06g0021730"/>
</dbReference>
<dbReference type="Gramene" id="OsMH63_06G021330_02">
    <property type="protein sequence ID" value="OsMH63_06G021330_02"/>
    <property type="gene ID" value="OsMH63_06G021330"/>
</dbReference>
<dbReference type="Gramene" id="OsPr106_06g0021580.01">
    <property type="protein sequence ID" value="OsPr106_06g0021580.01"/>
    <property type="gene ID" value="OsPr106_06g0021580"/>
</dbReference>
<dbReference type="OrthoDB" id="2012850at2759"/>
<dbReference type="Proteomes" id="UP000007015">
    <property type="component" value="Chromosome 6"/>
</dbReference>
<dbReference type="GO" id="GO:0005737">
    <property type="term" value="C:cytoplasm"/>
    <property type="evidence" value="ECO:0007669"/>
    <property type="project" value="TreeGrafter"/>
</dbReference>
<dbReference type="GO" id="GO:0005634">
    <property type="term" value="C:nucleus"/>
    <property type="evidence" value="ECO:0007669"/>
    <property type="project" value="UniProtKB-SubCell"/>
</dbReference>
<dbReference type="GO" id="GO:0005525">
    <property type="term" value="F:GTP binding"/>
    <property type="evidence" value="ECO:0007669"/>
    <property type="project" value="UniProtKB-KW"/>
</dbReference>
<dbReference type="GO" id="GO:0003924">
    <property type="term" value="F:GTPase activity"/>
    <property type="evidence" value="ECO:0007669"/>
    <property type="project" value="InterPro"/>
</dbReference>
<dbReference type="GO" id="GO:0006606">
    <property type="term" value="P:protein import into nucleus"/>
    <property type="evidence" value="ECO:0007669"/>
    <property type="project" value="TreeGrafter"/>
</dbReference>
<dbReference type="GO" id="GO:0000054">
    <property type="term" value="P:ribosomal subunit export from nucleus"/>
    <property type="evidence" value="ECO:0007669"/>
    <property type="project" value="TreeGrafter"/>
</dbReference>
<dbReference type="CDD" id="cd00877">
    <property type="entry name" value="Ran"/>
    <property type="match status" value="1"/>
</dbReference>
<dbReference type="FunFam" id="3.40.50.300:FF:000369">
    <property type="entry name" value="GTP-binding nuclear protein"/>
    <property type="match status" value="1"/>
</dbReference>
<dbReference type="Gene3D" id="3.40.50.300">
    <property type="entry name" value="P-loop containing nucleotide triphosphate hydrolases"/>
    <property type="match status" value="1"/>
</dbReference>
<dbReference type="InterPro" id="IPR027417">
    <property type="entry name" value="P-loop_NTPase"/>
</dbReference>
<dbReference type="InterPro" id="IPR002041">
    <property type="entry name" value="Ran_GTPase"/>
</dbReference>
<dbReference type="InterPro" id="IPR005225">
    <property type="entry name" value="Small_GTP-bd"/>
</dbReference>
<dbReference type="InterPro" id="IPR001806">
    <property type="entry name" value="Small_GTPase"/>
</dbReference>
<dbReference type="NCBIfam" id="TIGR00231">
    <property type="entry name" value="small_GTP"/>
    <property type="match status" value="1"/>
</dbReference>
<dbReference type="PANTHER" id="PTHR24071:SF18">
    <property type="entry name" value="GTP-BINDING NUCLEAR PROTEIN RAN-3"/>
    <property type="match status" value="1"/>
</dbReference>
<dbReference type="PANTHER" id="PTHR24071">
    <property type="entry name" value="RAN GTPASE"/>
    <property type="match status" value="1"/>
</dbReference>
<dbReference type="Pfam" id="PF00071">
    <property type="entry name" value="Ras"/>
    <property type="match status" value="1"/>
</dbReference>
<dbReference type="PRINTS" id="PR00627">
    <property type="entry name" value="GTPRANTC4"/>
</dbReference>
<dbReference type="SMART" id="SM00175">
    <property type="entry name" value="RAB"/>
    <property type="match status" value="1"/>
</dbReference>
<dbReference type="SMART" id="SM00176">
    <property type="entry name" value="RAN"/>
    <property type="match status" value="1"/>
</dbReference>
<dbReference type="SMART" id="SM00173">
    <property type="entry name" value="RAS"/>
    <property type="match status" value="1"/>
</dbReference>
<dbReference type="SMART" id="SM00174">
    <property type="entry name" value="RHO"/>
    <property type="match status" value="1"/>
</dbReference>
<dbReference type="SUPFAM" id="SSF52540">
    <property type="entry name" value="P-loop containing nucleoside triphosphate hydrolases"/>
    <property type="match status" value="1"/>
</dbReference>
<dbReference type="PROSITE" id="PS51418">
    <property type="entry name" value="RAN"/>
    <property type="match status" value="1"/>
</dbReference>
<sequence>MSRAQALPDPAAVGYPSFKLILVGDGGTGKTTFVKRHITGEFEKRYEPTIGVEVRPLDFHTSRGKVRFCCWDTAGQEKFGGLRDGYYIHGHCAIIMFDVTSRLTYKNVPTWHKDICRVCDNIPIVLCGNKVDMKNRQVKAKMVTFHRKKNLQYYEISAKSNYNFEKPFLYLARKLTGDMNLRFVEELALLPADVTIDLIAQQKIETEIAAAAAMPLPDEDEDGLMD</sequence>
<reference key="1">
    <citation type="journal article" date="2005" name="PLoS Biol.">
        <title>The genomes of Oryza sativa: a history of duplications.</title>
        <authorList>
            <person name="Yu J."/>
            <person name="Wang J."/>
            <person name="Lin W."/>
            <person name="Li S."/>
            <person name="Li H."/>
            <person name="Zhou J."/>
            <person name="Ni P."/>
            <person name="Dong W."/>
            <person name="Hu S."/>
            <person name="Zeng C."/>
            <person name="Zhang J."/>
            <person name="Zhang Y."/>
            <person name="Li R."/>
            <person name="Xu Z."/>
            <person name="Li S."/>
            <person name="Li X."/>
            <person name="Zheng H."/>
            <person name="Cong L."/>
            <person name="Lin L."/>
            <person name="Yin J."/>
            <person name="Geng J."/>
            <person name="Li G."/>
            <person name="Shi J."/>
            <person name="Liu J."/>
            <person name="Lv H."/>
            <person name="Li J."/>
            <person name="Wang J."/>
            <person name="Deng Y."/>
            <person name="Ran L."/>
            <person name="Shi X."/>
            <person name="Wang X."/>
            <person name="Wu Q."/>
            <person name="Li C."/>
            <person name="Ren X."/>
            <person name="Wang J."/>
            <person name="Wang X."/>
            <person name="Li D."/>
            <person name="Liu D."/>
            <person name="Zhang X."/>
            <person name="Ji Z."/>
            <person name="Zhao W."/>
            <person name="Sun Y."/>
            <person name="Zhang Z."/>
            <person name="Bao J."/>
            <person name="Han Y."/>
            <person name="Dong L."/>
            <person name="Ji J."/>
            <person name="Chen P."/>
            <person name="Wu S."/>
            <person name="Liu J."/>
            <person name="Xiao Y."/>
            <person name="Bu D."/>
            <person name="Tan J."/>
            <person name="Yang L."/>
            <person name="Ye C."/>
            <person name="Zhang J."/>
            <person name="Xu J."/>
            <person name="Zhou Y."/>
            <person name="Yu Y."/>
            <person name="Zhang B."/>
            <person name="Zhuang S."/>
            <person name="Wei H."/>
            <person name="Liu B."/>
            <person name="Lei M."/>
            <person name="Yu H."/>
            <person name="Li Y."/>
            <person name="Xu H."/>
            <person name="Wei S."/>
            <person name="He X."/>
            <person name="Fang L."/>
            <person name="Zhang Z."/>
            <person name="Zhang Y."/>
            <person name="Huang X."/>
            <person name="Su Z."/>
            <person name="Tong W."/>
            <person name="Li J."/>
            <person name="Tong Z."/>
            <person name="Li S."/>
            <person name="Ye J."/>
            <person name="Wang L."/>
            <person name="Fang L."/>
            <person name="Lei T."/>
            <person name="Chen C.-S."/>
            <person name="Chen H.-C."/>
            <person name="Xu Z."/>
            <person name="Li H."/>
            <person name="Huang H."/>
            <person name="Zhang F."/>
            <person name="Xu H."/>
            <person name="Li N."/>
            <person name="Zhao C."/>
            <person name="Li S."/>
            <person name="Dong L."/>
            <person name="Huang Y."/>
            <person name="Li L."/>
            <person name="Xi Y."/>
            <person name="Qi Q."/>
            <person name="Li W."/>
            <person name="Zhang B."/>
            <person name="Hu W."/>
            <person name="Zhang Y."/>
            <person name="Tian X."/>
            <person name="Jiao Y."/>
            <person name="Liang X."/>
            <person name="Jin J."/>
            <person name="Gao L."/>
            <person name="Zheng W."/>
            <person name="Hao B."/>
            <person name="Liu S.-M."/>
            <person name="Wang W."/>
            <person name="Yuan L."/>
            <person name="Cao M."/>
            <person name="McDermott J."/>
            <person name="Samudrala R."/>
            <person name="Wang J."/>
            <person name="Wong G.K.-S."/>
            <person name="Yang H."/>
        </authorList>
    </citation>
    <scope>NUCLEOTIDE SEQUENCE [LARGE SCALE GENOMIC DNA]</scope>
    <source>
        <strain>cv. 93-11</strain>
    </source>
</reference>
<proteinExistence type="evidence at transcript level"/>
<protein>
    <recommendedName>
        <fullName>GTP-binding nuclear protein Ran-3</fullName>
        <shortName>OsRan3</shortName>
    </recommendedName>
    <alternativeName>
        <fullName>Ras-related nuclear protein 3</fullName>
    </alternativeName>
</protein>